<comment type="function">
    <text evidence="1">Allows the formation of correctly charged Gln-tRNA(Gln) through the transamidation of misacylated Glu-tRNA(Gln) in organisms which lack glutaminyl-tRNA synthetase. The reaction takes place in the presence of glutamine and ATP through an activated gamma-phospho-Glu-tRNA(Gln).</text>
</comment>
<comment type="catalytic activity">
    <reaction evidence="1">
        <text>L-glutamyl-tRNA(Gln) + L-glutamine + ATP + H2O = L-glutaminyl-tRNA(Gln) + L-glutamate + ADP + phosphate + H(+)</text>
        <dbReference type="Rhea" id="RHEA:17521"/>
        <dbReference type="Rhea" id="RHEA-COMP:9681"/>
        <dbReference type="Rhea" id="RHEA-COMP:9684"/>
        <dbReference type="ChEBI" id="CHEBI:15377"/>
        <dbReference type="ChEBI" id="CHEBI:15378"/>
        <dbReference type="ChEBI" id="CHEBI:29985"/>
        <dbReference type="ChEBI" id="CHEBI:30616"/>
        <dbReference type="ChEBI" id="CHEBI:43474"/>
        <dbReference type="ChEBI" id="CHEBI:58359"/>
        <dbReference type="ChEBI" id="CHEBI:78520"/>
        <dbReference type="ChEBI" id="CHEBI:78521"/>
        <dbReference type="ChEBI" id="CHEBI:456216"/>
        <dbReference type="EC" id="6.3.5.7"/>
    </reaction>
</comment>
<comment type="subunit">
    <text evidence="1">Heterotrimer of A, B and C subunits.</text>
</comment>
<comment type="similarity">
    <text evidence="1">Belongs to the amidase family. GatA subfamily.</text>
</comment>
<keyword id="KW-0067">ATP-binding</keyword>
<keyword id="KW-0436">Ligase</keyword>
<keyword id="KW-0547">Nucleotide-binding</keyword>
<keyword id="KW-0648">Protein biosynthesis</keyword>
<keyword id="KW-1185">Reference proteome</keyword>
<dbReference type="EC" id="6.3.5.7" evidence="1"/>
<dbReference type="EMBL" id="CT978603">
    <property type="protein sequence ID" value="CAK28229.1"/>
    <property type="molecule type" value="Genomic_DNA"/>
</dbReference>
<dbReference type="SMR" id="A5GTM0"/>
<dbReference type="STRING" id="316278.SynRCC307_1326"/>
<dbReference type="KEGG" id="syr:SynRCC307_1326"/>
<dbReference type="eggNOG" id="COG0154">
    <property type="taxonomic scope" value="Bacteria"/>
</dbReference>
<dbReference type="HOGENOM" id="CLU_009600_0_3_3"/>
<dbReference type="OrthoDB" id="9811471at2"/>
<dbReference type="Proteomes" id="UP000001115">
    <property type="component" value="Chromosome"/>
</dbReference>
<dbReference type="GO" id="GO:0030956">
    <property type="term" value="C:glutamyl-tRNA(Gln) amidotransferase complex"/>
    <property type="evidence" value="ECO:0007669"/>
    <property type="project" value="InterPro"/>
</dbReference>
<dbReference type="GO" id="GO:0005524">
    <property type="term" value="F:ATP binding"/>
    <property type="evidence" value="ECO:0007669"/>
    <property type="project" value="UniProtKB-KW"/>
</dbReference>
<dbReference type="GO" id="GO:0050567">
    <property type="term" value="F:glutaminyl-tRNA synthase (glutamine-hydrolyzing) activity"/>
    <property type="evidence" value="ECO:0007669"/>
    <property type="project" value="UniProtKB-UniRule"/>
</dbReference>
<dbReference type="GO" id="GO:0006412">
    <property type="term" value="P:translation"/>
    <property type="evidence" value="ECO:0007669"/>
    <property type="project" value="UniProtKB-UniRule"/>
</dbReference>
<dbReference type="Gene3D" id="3.90.1300.10">
    <property type="entry name" value="Amidase signature (AS) domain"/>
    <property type="match status" value="1"/>
</dbReference>
<dbReference type="HAMAP" id="MF_00120">
    <property type="entry name" value="GatA"/>
    <property type="match status" value="1"/>
</dbReference>
<dbReference type="InterPro" id="IPR000120">
    <property type="entry name" value="Amidase"/>
</dbReference>
<dbReference type="InterPro" id="IPR020556">
    <property type="entry name" value="Amidase_CS"/>
</dbReference>
<dbReference type="InterPro" id="IPR023631">
    <property type="entry name" value="Amidase_dom"/>
</dbReference>
<dbReference type="InterPro" id="IPR036928">
    <property type="entry name" value="AS_sf"/>
</dbReference>
<dbReference type="InterPro" id="IPR004412">
    <property type="entry name" value="GatA"/>
</dbReference>
<dbReference type="NCBIfam" id="TIGR00132">
    <property type="entry name" value="gatA"/>
    <property type="match status" value="1"/>
</dbReference>
<dbReference type="PANTHER" id="PTHR11895:SF151">
    <property type="entry name" value="GLUTAMYL-TRNA(GLN) AMIDOTRANSFERASE SUBUNIT A"/>
    <property type="match status" value="1"/>
</dbReference>
<dbReference type="PANTHER" id="PTHR11895">
    <property type="entry name" value="TRANSAMIDASE"/>
    <property type="match status" value="1"/>
</dbReference>
<dbReference type="Pfam" id="PF01425">
    <property type="entry name" value="Amidase"/>
    <property type="match status" value="1"/>
</dbReference>
<dbReference type="SUPFAM" id="SSF75304">
    <property type="entry name" value="Amidase signature (AS) enzymes"/>
    <property type="match status" value="1"/>
</dbReference>
<dbReference type="PROSITE" id="PS00571">
    <property type="entry name" value="AMIDASES"/>
    <property type="match status" value="1"/>
</dbReference>
<accession>A5GTM0</accession>
<proteinExistence type="inferred from homology"/>
<sequence>MPIGAWSDALRNGSATAKEHSEQALERIAATEPELKAFVNVTGDQARAQAEAVDQAIAAKQDPGPLAGVTIGIKDNLCTKGVTTTCSSRMLENFVPPYESTVTERLWKAGAVMVGKTNLDEFAMGSSTETSAFGMTSNPWDPGRVPGGSSGGSAACVAAGQCDVALGSDTGGSIRQPASFCGVVGLKPTYGRVSRWGLVAFASSLDQIGPFSRTVADSAAVLQVIAGHDPRDSTSLDVPVPDYSAALNRPIQGLKIGILQEAFVEGLQPEVEASVRAAAEQLASLGCELVDVSCPRFQAGIATYYVIAPSEASANLARYDGVKYGYRAADAESLSAMTAKSRAEGFGDEVQRRILIGTYALSAGYVDAYYKKAQQVRTLIRQEFDRAFEQVDLLLTPTAPTTAFTPGEHSNDPLAMYLADLLTIPANLAGLPAISVPCGFDGQGLPIGLQLMAPVLQEERLLQVAHHYEQAADVMANRPEAPLVA</sequence>
<feature type="chain" id="PRO_1000015922" description="Glutamyl-tRNA(Gln) amidotransferase subunit A">
    <location>
        <begin position="1"/>
        <end position="485"/>
    </location>
</feature>
<feature type="active site" description="Charge relay system" evidence="1">
    <location>
        <position position="74"/>
    </location>
</feature>
<feature type="active site" description="Charge relay system" evidence="1">
    <location>
        <position position="149"/>
    </location>
</feature>
<feature type="active site" description="Acyl-ester intermediate" evidence="1">
    <location>
        <position position="173"/>
    </location>
</feature>
<gene>
    <name evidence="1" type="primary">gatA</name>
    <name type="ordered locus">SynRCC307_1326</name>
</gene>
<organism>
    <name type="scientific">Synechococcus sp. (strain RCC307)</name>
    <dbReference type="NCBI Taxonomy" id="316278"/>
    <lineage>
        <taxon>Bacteria</taxon>
        <taxon>Bacillati</taxon>
        <taxon>Cyanobacteriota</taxon>
        <taxon>Cyanophyceae</taxon>
        <taxon>Synechococcales</taxon>
        <taxon>Synechococcaceae</taxon>
        <taxon>Synechococcus</taxon>
    </lineage>
</organism>
<evidence type="ECO:0000255" key="1">
    <source>
        <dbReference type="HAMAP-Rule" id="MF_00120"/>
    </source>
</evidence>
<protein>
    <recommendedName>
        <fullName evidence="1">Glutamyl-tRNA(Gln) amidotransferase subunit A</fullName>
        <shortName evidence="1">Glu-ADT subunit A</shortName>
        <ecNumber evidence="1">6.3.5.7</ecNumber>
    </recommendedName>
</protein>
<reference key="1">
    <citation type="submission" date="2006-05" db="EMBL/GenBank/DDBJ databases">
        <authorList>
            <consortium name="Genoscope"/>
        </authorList>
    </citation>
    <scope>NUCLEOTIDE SEQUENCE [LARGE SCALE GENOMIC DNA]</scope>
    <source>
        <strain>RCC307</strain>
    </source>
</reference>
<name>GATA_SYNR3</name>